<comment type="function">
    <text evidence="1">Transfers the 4'-phosphopantetheine moiety from coenzyme A to a Ser of acyl-carrier-protein.</text>
</comment>
<comment type="catalytic activity">
    <reaction evidence="1">
        <text>apo-[ACP] + CoA = holo-[ACP] + adenosine 3',5'-bisphosphate + H(+)</text>
        <dbReference type="Rhea" id="RHEA:12068"/>
        <dbReference type="Rhea" id="RHEA-COMP:9685"/>
        <dbReference type="Rhea" id="RHEA-COMP:9690"/>
        <dbReference type="ChEBI" id="CHEBI:15378"/>
        <dbReference type="ChEBI" id="CHEBI:29999"/>
        <dbReference type="ChEBI" id="CHEBI:57287"/>
        <dbReference type="ChEBI" id="CHEBI:58343"/>
        <dbReference type="ChEBI" id="CHEBI:64479"/>
        <dbReference type="EC" id="2.7.8.7"/>
    </reaction>
</comment>
<comment type="cofactor">
    <cofactor evidence="1">
        <name>Mg(2+)</name>
        <dbReference type="ChEBI" id="CHEBI:18420"/>
    </cofactor>
</comment>
<comment type="subcellular location">
    <subcellularLocation>
        <location evidence="1">Cytoplasm</location>
    </subcellularLocation>
</comment>
<comment type="similarity">
    <text evidence="1">Belongs to the P-Pant transferase superfamily. AcpS family.</text>
</comment>
<dbReference type="EC" id="2.7.8.7" evidence="1"/>
<dbReference type="EMBL" id="CP000016">
    <property type="protein sequence ID" value="AAZ41168.1"/>
    <property type="molecule type" value="Genomic_DNA"/>
</dbReference>
<dbReference type="SMR" id="Q492D3"/>
<dbReference type="STRING" id="291272.BPEN_558"/>
<dbReference type="KEGG" id="bpn:BPEN_558"/>
<dbReference type="eggNOG" id="COG0736">
    <property type="taxonomic scope" value="Bacteria"/>
</dbReference>
<dbReference type="HOGENOM" id="CLU_089696_3_1_6"/>
<dbReference type="OrthoDB" id="517356at2"/>
<dbReference type="Proteomes" id="UP000007794">
    <property type="component" value="Chromosome"/>
</dbReference>
<dbReference type="GO" id="GO:0005737">
    <property type="term" value="C:cytoplasm"/>
    <property type="evidence" value="ECO:0007669"/>
    <property type="project" value="UniProtKB-SubCell"/>
</dbReference>
<dbReference type="GO" id="GO:0008897">
    <property type="term" value="F:holo-[acyl-carrier-protein] synthase activity"/>
    <property type="evidence" value="ECO:0007669"/>
    <property type="project" value="UniProtKB-UniRule"/>
</dbReference>
<dbReference type="GO" id="GO:0000287">
    <property type="term" value="F:magnesium ion binding"/>
    <property type="evidence" value="ECO:0007669"/>
    <property type="project" value="UniProtKB-UniRule"/>
</dbReference>
<dbReference type="GO" id="GO:0006633">
    <property type="term" value="P:fatty acid biosynthetic process"/>
    <property type="evidence" value="ECO:0007669"/>
    <property type="project" value="UniProtKB-UniRule"/>
</dbReference>
<dbReference type="FunFam" id="3.90.470.20:FF:000001">
    <property type="entry name" value="Holo-[acyl-carrier-protein] synthase"/>
    <property type="match status" value="1"/>
</dbReference>
<dbReference type="Gene3D" id="3.90.470.20">
    <property type="entry name" value="4'-phosphopantetheinyl transferase domain"/>
    <property type="match status" value="1"/>
</dbReference>
<dbReference type="HAMAP" id="MF_00101">
    <property type="entry name" value="AcpS"/>
    <property type="match status" value="1"/>
</dbReference>
<dbReference type="InterPro" id="IPR008278">
    <property type="entry name" value="4-PPantetheinyl_Trfase_dom"/>
</dbReference>
<dbReference type="InterPro" id="IPR037143">
    <property type="entry name" value="4-PPantetheinyl_Trfase_dom_sf"/>
</dbReference>
<dbReference type="InterPro" id="IPR002582">
    <property type="entry name" value="ACPS"/>
</dbReference>
<dbReference type="InterPro" id="IPR004568">
    <property type="entry name" value="Ppantetheine-prot_Trfase_dom"/>
</dbReference>
<dbReference type="NCBIfam" id="TIGR00516">
    <property type="entry name" value="acpS"/>
    <property type="match status" value="1"/>
</dbReference>
<dbReference type="NCBIfam" id="TIGR00556">
    <property type="entry name" value="pantethn_trn"/>
    <property type="match status" value="1"/>
</dbReference>
<dbReference type="Pfam" id="PF01648">
    <property type="entry name" value="ACPS"/>
    <property type="match status" value="1"/>
</dbReference>
<dbReference type="SUPFAM" id="SSF56214">
    <property type="entry name" value="4'-phosphopantetheinyl transferase"/>
    <property type="match status" value="1"/>
</dbReference>
<proteinExistence type="inferred from homology"/>
<keyword id="KW-0963">Cytoplasm</keyword>
<keyword id="KW-0275">Fatty acid biosynthesis</keyword>
<keyword id="KW-0276">Fatty acid metabolism</keyword>
<keyword id="KW-0444">Lipid biosynthesis</keyword>
<keyword id="KW-0443">Lipid metabolism</keyword>
<keyword id="KW-0460">Magnesium</keyword>
<keyword id="KW-0479">Metal-binding</keyword>
<keyword id="KW-1185">Reference proteome</keyword>
<keyword id="KW-0808">Transferase</keyword>
<accession>Q492D3</accession>
<reference key="1">
    <citation type="journal article" date="2005" name="Genome Res.">
        <title>Genome sequence of Blochmannia pennsylvanicus indicates parallel evolutionary trends among bacterial mutualists of insects.</title>
        <authorList>
            <person name="Degnan P.H."/>
            <person name="Lazarus A.B."/>
            <person name="Wernegreen J.J."/>
        </authorList>
    </citation>
    <scope>NUCLEOTIDE SEQUENCE [LARGE SCALE GENOMIC DNA]</scope>
    <source>
        <strain>BPEN</strain>
    </source>
</reference>
<protein>
    <recommendedName>
        <fullName evidence="1">Holo-[acyl-carrier-protein] synthase</fullName>
        <shortName evidence="1">Holo-ACP synthase</shortName>
        <ecNumber evidence="1">2.7.8.7</ecNumber>
    </recommendedName>
    <alternativeName>
        <fullName evidence="1">4'-phosphopantetheinyl transferase AcpS</fullName>
    </alternativeName>
</protein>
<feature type="chain" id="PRO_0000228270" description="Holo-[acyl-carrier-protein] synthase">
    <location>
        <begin position="1"/>
        <end position="125"/>
    </location>
</feature>
<feature type="binding site" evidence="1">
    <location>
        <position position="8"/>
    </location>
    <ligand>
        <name>Mg(2+)</name>
        <dbReference type="ChEBI" id="CHEBI:18420"/>
    </ligand>
</feature>
<feature type="binding site" evidence="1">
    <location>
        <position position="57"/>
    </location>
    <ligand>
        <name>Mg(2+)</name>
        <dbReference type="ChEBI" id="CHEBI:18420"/>
    </ligand>
</feature>
<gene>
    <name evidence="1" type="primary">acpS</name>
    <name type="ordered locus">BPEN_558</name>
</gene>
<sequence length="125" mass="14080">MIHGIGIDIVDIRKIKKIITHSGDKLATRILSKSEWKIYKNKKHPVHFLAKRFAAKEAVSKAFGTGINQGVTFNQIEIFNDKLGKPMLHLFSCTALLANKLSLKKMHITLSDTNSYACAFVILER</sequence>
<name>ACPS_BLOPB</name>
<evidence type="ECO:0000255" key="1">
    <source>
        <dbReference type="HAMAP-Rule" id="MF_00101"/>
    </source>
</evidence>
<organism>
    <name type="scientific">Blochmanniella pennsylvanica (strain BPEN)</name>
    <dbReference type="NCBI Taxonomy" id="291272"/>
    <lineage>
        <taxon>Bacteria</taxon>
        <taxon>Pseudomonadati</taxon>
        <taxon>Pseudomonadota</taxon>
        <taxon>Gammaproteobacteria</taxon>
        <taxon>Enterobacterales</taxon>
        <taxon>Enterobacteriaceae</taxon>
        <taxon>ant endosymbionts</taxon>
        <taxon>Candidatus Blochmanniella</taxon>
    </lineage>
</organism>